<feature type="chain" id="PRO_0000088042" description="tRNA (cytosine(38)-C(5))-methyltransferase">
    <location>
        <begin position="1"/>
        <end position="330"/>
    </location>
</feature>
<feature type="domain" description="SAM-dependent MTase C5-type" evidence="1">
    <location>
        <begin position="7"/>
        <end position="330"/>
    </location>
</feature>
<feature type="active site" evidence="1">
    <location>
        <position position="81"/>
    </location>
</feature>
<feature type="mutagenesis site" description="Loss of methyltransferase activity." evidence="3">
    <original>C</original>
    <variation>A</variation>
    <location>
        <position position="81"/>
    </location>
</feature>
<feature type="strand" evidence="6">
    <location>
        <begin position="7"/>
        <end position="13"/>
    </location>
</feature>
<feature type="turn" evidence="6">
    <location>
        <begin position="15"/>
        <end position="17"/>
    </location>
</feature>
<feature type="helix" evidence="6">
    <location>
        <begin position="18"/>
        <end position="25"/>
    </location>
</feature>
<feature type="strand" evidence="6">
    <location>
        <begin position="30"/>
        <end position="38"/>
    </location>
</feature>
<feature type="helix" evidence="6">
    <location>
        <begin position="40"/>
        <end position="50"/>
    </location>
</feature>
<feature type="strand" evidence="6">
    <location>
        <begin position="54"/>
        <end position="56"/>
    </location>
</feature>
<feature type="helix" evidence="6">
    <location>
        <begin position="59"/>
        <end position="61"/>
    </location>
</feature>
<feature type="helix" evidence="6">
    <location>
        <begin position="64"/>
        <end position="70"/>
    </location>
</feature>
<feature type="strand" evidence="6">
    <location>
        <begin position="73"/>
        <end position="77"/>
    </location>
</feature>
<feature type="strand" evidence="6">
    <location>
        <begin position="83"/>
        <end position="85"/>
    </location>
</feature>
<feature type="helix" evidence="6">
    <location>
        <begin position="99"/>
        <end position="107"/>
    </location>
</feature>
<feature type="helix" evidence="6">
    <location>
        <begin position="108"/>
        <end position="110"/>
    </location>
</feature>
<feature type="strand" evidence="6">
    <location>
        <begin position="111"/>
        <end position="113"/>
    </location>
</feature>
<feature type="strand" evidence="6">
    <location>
        <begin position="116"/>
        <end position="123"/>
    </location>
</feature>
<feature type="helix" evidence="6">
    <location>
        <begin position="126"/>
        <end position="128"/>
    </location>
</feature>
<feature type="helix" evidence="6">
    <location>
        <begin position="130"/>
        <end position="141"/>
    </location>
</feature>
<feature type="strand" evidence="6">
    <location>
        <begin position="144"/>
        <end position="151"/>
    </location>
</feature>
<feature type="helix" evidence="6">
    <location>
        <begin position="153"/>
        <end position="155"/>
    </location>
</feature>
<feature type="strand" evidence="6">
    <location>
        <begin position="164"/>
        <end position="171"/>
    </location>
</feature>
<feature type="helix" evidence="6">
    <location>
        <begin position="179"/>
        <end position="185"/>
    </location>
</feature>
<feature type="strand" evidence="6">
    <location>
        <begin position="192"/>
        <end position="195"/>
    </location>
</feature>
<feature type="helix" evidence="6">
    <location>
        <begin position="198"/>
        <end position="200"/>
    </location>
</feature>
<feature type="helix" evidence="6">
    <location>
        <begin position="209"/>
        <end position="211"/>
    </location>
</feature>
<feature type="helix" evidence="6">
    <location>
        <begin position="215"/>
        <end position="221"/>
    </location>
</feature>
<feature type="helix" evidence="6">
    <location>
        <begin position="222"/>
        <end position="224"/>
    </location>
</feature>
<feature type="turn" evidence="6">
    <location>
        <begin position="240"/>
        <end position="244"/>
    </location>
</feature>
<feature type="strand" evidence="6">
    <location>
        <begin position="252"/>
        <end position="254"/>
    </location>
</feature>
<feature type="helix" evidence="6">
    <location>
        <begin position="261"/>
        <end position="268"/>
    </location>
</feature>
<feature type="helix" evidence="6">
    <location>
        <begin position="269"/>
        <end position="272"/>
    </location>
</feature>
<feature type="helix" evidence="6">
    <location>
        <begin position="279"/>
        <end position="285"/>
    </location>
</feature>
<feature type="helix" evidence="6">
    <location>
        <begin position="301"/>
        <end position="309"/>
    </location>
</feature>
<feature type="helix" evidence="6">
    <location>
        <begin position="314"/>
        <end position="324"/>
    </location>
</feature>
<feature type="helix" evidence="6">
    <location>
        <begin position="326"/>
        <end position="328"/>
    </location>
</feature>
<sequence length="330" mass="37976">MLSTKRLRVLELYSGIGGMHYALNLANIPADIVCAIDINPQANEIYNLNHGKLAKHMDISTLTAKDFDAFDCKLWTMSPSCQPFTRIGNRKDILDPRSQAFLNILNVLPHVNNLPEYILIENVQGFEESKAAEECRKVLRNCGYNLIEGILSPNQFNIPNSRSRWYGLARLNFKGEWSIDDVFQFSEVAQKEGEVKRIRDYLEIERDWSSYMVLESVLNKWGHQFDIVKPDSSSCCCFTRGYTHLVQGAGSILQMSDHENTHEQFERNRMALQLRYFTAREVARLMGFPESLEWSKSNVTEKCMYRLLGNSINVKVVSYLISLLLEPLNF</sequence>
<evidence type="ECO:0000255" key="1">
    <source>
        <dbReference type="PROSITE-ProRule" id="PRU01016"/>
    </source>
</evidence>
<evidence type="ECO:0000269" key="2">
    <source>
    </source>
</evidence>
<evidence type="ECO:0000269" key="3">
    <source>
    </source>
</evidence>
<evidence type="ECO:0000305" key="4">
    <source>
    </source>
</evidence>
<evidence type="ECO:0000305" key="5">
    <source>
    </source>
</evidence>
<evidence type="ECO:0007829" key="6">
    <source>
        <dbReference type="PDB" id="6FDF"/>
    </source>
</evidence>
<gene>
    <name type="primary">pmt1</name>
    <name type="ORF">SPBC19C2.02</name>
</gene>
<organism>
    <name type="scientific">Schizosaccharomyces pombe (strain 972 / ATCC 24843)</name>
    <name type="common">Fission yeast</name>
    <dbReference type="NCBI Taxonomy" id="284812"/>
    <lineage>
        <taxon>Eukaryota</taxon>
        <taxon>Fungi</taxon>
        <taxon>Dikarya</taxon>
        <taxon>Ascomycota</taxon>
        <taxon>Taphrinomycotina</taxon>
        <taxon>Schizosaccharomycetes</taxon>
        <taxon>Schizosaccharomycetales</taxon>
        <taxon>Schizosaccharomycetaceae</taxon>
        <taxon>Schizosaccharomyces</taxon>
    </lineage>
</organism>
<keyword id="KW-0002">3D-structure</keyword>
<keyword id="KW-0963">Cytoplasm</keyword>
<keyword id="KW-0489">Methyltransferase</keyword>
<keyword id="KW-0539">Nucleus</keyword>
<keyword id="KW-1185">Reference proteome</keyword>
<keyword id="KW-0694">RNA-binding</keyword>
<keyword id="KW-0949">S-adenosyl-L-methionine</keyword>
<keyword id="KW-0808">Transferase</keyword>
<keyword id="KW-0819">tRNA processing</keyword>
<reference key="1">
    <citation type="journal article" date="1995" name="Nucleic Acids Res.">
        <title>The fission yeast gene pmt1+ encodes a DNA methyltransferase homologue.</title>
        <authorList>
            <person name="Wilkinson C.R.M."/>
            <person name="Bartlett R."/>
            <person name="Nurse P."/>
            <person name="Bird A.P."/>
        </authorList>
    </citation>
    <scope>NUCLEOTIDE SEQUENCE [GENOMIC DNA]</scope>
    <scope>CHARACTERIZATION</scope>
    <source>
        <strain>972 / ATCC 24843</strain>
    </source>
</reference>
<reference key="2">
    <citation type="journal article" date="2002" name="Nature">
        <title>The genome sequence of Schizosaccharomyces pombe.</title>
        <authorList>
            <person name="Wood V."/>
            <person name="Gwilliam R."/>
            <person name="Rajandream M.A."/>
            <person name="Lyne M.H."/>
            <person name="Lyne R."/>
            <person name="Stewart A."/>
            <person name="Sgouros J.G."/>
            <person name="Peat N."/>
            <person name="Hayles J."/>
            <person name="Baker S.G."/>
            <person name="Basham D."/>
            <person name="Bowman S."/>
            <person name="Brooks K."/>
            <person name="Brown D."/>
            <person name="Brown S."/>
            <person name="Chillingworth T."/>
            <person name="Churcher C.M."/>
            <person name="Collins M."/>
            <person name="Connor R."/>
            <person name="Cronin A."/>
            <person name="Davis P."/>
            <person name="Feltwell T."/>
            <person name="Fraser A."/>
            <person name="Gentles S."/>
            <person name="Goble A."/>
            <person name="Hamlin N."/>
            <person name="Harris D.E."/>
            <person name="Hidalgo J."/>
            <person name="Hodgson G."/>
            <person name="Holroyd S."/>
            <person name="Hornsby T."/>
            <person name="Howarth S."/>
            <person name="Huckle E.J."/>
            <person name="Hunt S."/>
            <person name="Jagels K."/>
            <person name="James K.D."/>
            <person name="Jones L."/>
            <person name="Jones M."/>
            <person name="Leather S."/>
            <person name="McDonald S."/>
            <person name="McLean J."/>
            <person name="Mooney P."/>
            <person name="Moule S."/>
            <person name="Mungall K.L."/>
            <person name="Murphy L.D."/>
            <person name="Niblett D."/>
            <person name="Odell C."/>
            <person name="Oliver K."/>
            <person name="O'Neil S."/>
            <person name="Pearson D."/>
            <person name="Quail M.A."/>
            <person name="Rabbinowitsch E."/>
            <person name="Rutherford K.M."/>
            <person name="Rutter S."/>
            <person name="Saunders D."/>
            <person name="Seeger K."/>
            <person name="Sharp S."/>
            <person name="Skelton J."/>
            <person name="Simmonds M.N."/>
            <person name="Squares R."/>
            <person name="Squares S."/>
            <person name="Stevens K."/>
            <person name="Taylor K."/>
            <person name="Taylor R.G."/>
            <person name="Tivey A."/>
            <person name="Walsh S.V."/>
            <person name="Warren T."/>
            <person name="Whitehead S."/>
            <person name="Woodward J.R."/>
            <person name="Volckaert G."/>
            <person name="Aert R."/>
            <person name="Robben J."/>
            <person name="Grymonprez B."/>
            <person name="Weltjens I."/>
            <person name="Vanstreels E."/>
            <person name="Rieger M."/>
            <person name="Schaefer M."/>
            <person name="Mueller-Auer S."/>
            <person name="Gabel C."/>
            <person name="Fuchs M."/>
            <person name="Duesterhoeft A."/>
            <person name="Fritzc C."/>
            <person name="Holzer E."/>
            <person name="Moestl D."/>
            <person name="Hilbert H."/>
            <person name="Borzym K."/>
            <person name="Langer I."/>
            <person name="Beck A."/>
            <person name="Lehrach H."/>
            <person name="Reinhardt R."/>
            <person name="Pohl T.M."/>
            <person name="Eger P."/>
            <person name="Zimmermann W."/>
            <person name="Wedler H."/>
            <person name="Wambutt R."/>
            <person name="Purnelle B."/>
            <person name="Goffeau A."/>
            <person name="Cadieu E."/>
            <person name="Dreano S."/>
            <person name="Gloux S."/>
            <person name="Lelaure V."/>
            <person name="Mottier S."/>
            <person name="Galibert F."/>
            <person name="Aves S.J."/>
            <person name="Xiang Z."/>
            <person name="Hunt C."/>
            <person name="Moore K."/>
            <person name="Hurst S.M."/>
            <person name="Lucas M."/>
            <person name="Rochet M."/>
            <person name="Gaillardin C."/>
            <person name="Tallada V.A."/>
            <person name="Garzon A."/>
            <person name="Thode G."/>
            <person name="Daga R.R."/>
            <person name="Cruzado L."/>
            <person name="Jimenez J."/>
            <person name="Sanchez M."/>
            <person name="del Rey F."/>
            <person name="Benito J."/>
            <person name="Dominguez A."/>
            <person name="Revuelta J.L."/>
            <person name="Moreno S."/>
            <person name="Armstrong J."/>
            <person name="Forsburg S.L."/>
            <person name="Cerutti L."/>
            <person name="Lowe T."/>
            <person name="McCombie W.R."/>
            <person name="Paulsen I."/>
            <person name="Potashkin J."/>
            <person name="Shpakovski G.V."/>
            <person name="Ussery D."/>
            <person name="Barrell B.G."/>
            <person name="Nurse P."/>
        </authorList>
    </citation>
    <scope>NUCLEOTIDE SEQUENCE [LARGE SCALE GENOMIC DNA]</scope>
    <source>
        <strain>972 / ATCC 24843</strain>
    </source>
</reference>
<reference key="3">
    <citation type="journal article" date="1996" name="J. Mol. Biol.">
        <title>Activation of a yeast pseudo DNA methyltransferase by deletion of a single amino acid.</title>
        <authorList>
            <person name="Pinarbasi E."/>
            <person name="Elliott J."/>
            <person name="Hornby D.P."/>
        </authorList>
    </citation>
    <scope>CHARACTERIZATION</scope>
</reference>
<reference key="4">
    <citation type="journal article" date="2006" name="Nat. Biotechnol.">
        <title>ORFeome cloning and global analysis of protein localization in the fission yeast Schizosaccharomyces pombe.</title>
        <authorList>
            <person name="Matsuyama A."/>
            <person name="Arai R."/>
            <person name="Yashiroda Y."/>
            <person name="Shirai A."/>
            <person name="Kamata A."/>
            <person name="Sekido S."/>
            <person name="Kobayashi Y."/>
            <person name="Hashimoto A."/>
            <person name="Hamamoto M."/>
            <person name="Hiraoka Y."/>
            <person name="Horinouchi S."/>
            <person name="Yoshida M."/>
        </authorList>
    </citation>
    <scope>SUBCELLULAR LOCATION [LARGE SCALE ANALYSIS]</scope>
</reference>
<reference key="5">
    <citation type="journal article" date="2012" name="Nucleic Acids Res.">
        <title>Pmt1, a Dnmt2 homolog in Schizosaccharomyces pombe, mediates tRNA methylation in response to nutrient signaling.</title>
        <authorList>
            <person name="Becker M."/>
            <person name="Muller S."/>
            <person name="Nellen W."/>
            <person name="Jurkowski T.P."/>
            <person name="Jeltsch A."/>
            <person name="Ehrenhofer-Murray A.E."/>
        </authorList>
    </citation>
    <scope>FUNCTION</scope>
    <scope>MUTAGENESIS OF CYS-81</scope>
    <scope>INDUCTION</scope>
</reference>
<proteinExistence type="evidence at protein level"/>
<dbReference type="EC" id="2.1.1.204"/>
<dbReference type="EMBL" id="X82444">
    <property type="protein sequence ID" value="CAA57824.1"/>
    <property type="molecule type" value="Genomic_DNA"/>
</dbReference>
<dbReference type="EMBL" id="CU329671">
    <property type="protein sequence ID" value="CAB52029.1"/>
    <property type="molecule type" value="Genomic_DNA"/>
</dbReference>
<dbReference type="PIR" id="S53990">
    <property type="entry name" value="S53990"/>
</dbReference>
<dbReference type="RefSeq" id="NP_595687.1">
    <property type="nucleotide sequence ID" value="NM_001021584.2"/>
</dbReference>
<dbReference type="PDB" id="6FDF">
    <property type="method" value="X-ray"/>
    <property type="resolution" value="1.70 A"/>
    <property type="chains" value="A/B/C/D=2-330"/>
</dbReference>
<dbReference type="PDBsum" id="6FDF"/>
<dbReference type="SMR" id="P40999"/>
<dbReference type="BioGRID" id="277286">
    <property type="interactions" value="17"/>
</dbReference>
<dbReference type="FunCoup" id="P40999">
    <property type="interactions" value="324"/>
</dbReference>
<dbReference type="STRING" id="284812.P40999"/>
<dbReference type="PaxDb" id="4896-SPBC19C2.02.1"/>
<dbReference type="EnsemblFungi" id="SPBC19C2.02.1">
    <property type="protein sequence ID" value="SPBC19C2.02.1:pep"/>
    <property type="gene ID" value="SPBC19C2.02"/>
</dbReference>
<dbReference type="GeneID" id="2540766"/>
<dbReference type="KEGG" id="spo:2540766"/>
<dbReference type="PomBase" id="SPBC19C2.02">
    <property type="gene designation" value="pmt1"/>
</dbReference>
<dbReference type="VEuPathDB" id="FungiDB:SPBC19C2.02"/>
<dbReference type="eggNOG" id="KOG0919">
    <property type="taxonomic scope" value="Eukaryota"/>
</dbReference>
<dbReference type="HOGENOM" id="CLU_049101_0_0_1"/>
<dbReference type="InParanoid" id="P40999"/>
<dbReference type="OMA" id="HYAFKYA"/>
<dbReference type="PhylomeDB" id="P40999"/>
<dbReference type="BRENDA" id="2.1.1.203">
    <property type="organism ID" value="5613"/>
</dbReference>
<dbReference type="BRENDA" id="2.1.1.204">
    <property type="organism ID" value="5613"/>
</dbReference>
<dbReference type="PRO" id="PR:P40999"/>
<dbReference type="Proteomes" id="UP000002485">
    <property type="component" value="Chromosome II"/>
</dbReference>
<dbReference type="GO" id="GO:0005829">
    <property type="term" value="C:cytosol"/>
    <property type="evidence" value="ECO:0007005"/>
    <property type="project" value="PomBase"/>
</dbReference>
<dbReference type="GO" id="GO:0005634">
    <property type="term" value="C:nucleus"/>
    <property type="evidence" value="ECO:0007005"/>
    <property type="project" value="PomBase"/>
</dbReference>
<dbReference type="GO" id="GO:0016427">
    <property type="term" value="F:tRNA (cytidine) methyltransferase activity"/>
    <property type="evidence" value="ECO:0000314"/>
    <property type="project" value="PomBase"/>
</dbReference>
<dbReference type="GO" id="GO:0016428">
    <property type="term" value="F:tRNA (cytidine-5-)-methyltransferase activity"/>
    <property type="evidence" value="ECO:0000314"/>
    <property type="project" value="PomBase"/>
</dbReference>
<dbReference type="GO" id="GO:0000049">
    <property type="term" value="F:tRNA binding"/>
    <property type="evidence" value="ECO:0000305"/>
    <property type="project" value="PomBase"/>
</dbReference>
<dbReference type="GO" id="GO:0002946">
    <property type="term" value="P:tRNA C5-cytosine methylation"/>
    <property type="evidence" value="ECO:0000315"/>
    <property type="project" value="PomBase"/>
</dbReference>
<dbReference type="CDD" id="cd00315">
    <property type="entry name" value="Cyt_C5_DNA_methylase"/>
    <property type="match status" value="1"/>
</dbReference>
<dbReference type="DisProt" id="DP02685"/>
<dbReference type="Gene3D" id="3.90.120.10">
    <property type="entry name" value="DNA Methylase, subunit A, domain 2"/>
    <property type="match status" value="1"/>
</dbReference>
<dbReference type="Gene3D" id="3.40.50.150">
    <property type="entry name" value="Vaccinia Virus protein VP39"/>
    <property type="match status" value="1"/>
</dbReference>
<dbReference type="InterPro" id="IPR050750">
    <property type="entry name" value="C5-MTase"/>
</dbReference>
<dbReference type="InterPro" id="IPR001525">
    <property type="entry name" value="C5_MeTfrase"/>
</dbReference>
<dbReference type="InterPro" id="IPR031303">
    <property type="entry name" value="C5_meth_CS"/>
</dbReference>
<dbReference type="InterPro" id="IPR029063">
    <property type="entry name" value="SAM-dependent_MTases_sf"/>
</dbReference>
<dbReference type="NCBIfam" id="TIGR00675">
    <property type="entry name" value="dcm"/>
    <property type="match status" value="1"/>
</dbReference>
<dbReference type="PANTHER" id="PTHR46098">
    <property type="entry name" value="TRNA (CYTOSINE(38)-C(5))-METHYLTRANSFERASE"/>
    <property type="match status" value="1"/>
</dbReference>
<dbReference type="PANTHER" id="PTHR46098:SF1">
    <property type="entry name" value="TRNA (CYTOSINE(38)-C(5))-METHYLTRANSFERASE"/>
    <property type="match status" value="1"/>
</dbReference>
<dbReference type="Pfam" id="PF00145">
    <property type="entry name" value="DNA_methylase"/>
    <property type="match status" value="1"/>
</dbReference>
<dbReference type="PRINTS" id="PR00105">
    <property type="entry name" value="C5METTRFRASE"/>
</dbReference>
<dbReference type="SUPFAM" id="SSF53335">
    <property type="entry name" value="S-adenosyl-L-methionine-dependent methyltransferases"/>
    <property type="match status" value="1"/>
</dbReference>
<dbReference type="PROSITE" id="PS00095">
    <property type="entry name" value="C5_MTASE_2"/>
    <property type="match status" value="1"/>
</dbReference>
<dbReference type="PROSITE" id="PS51679">
    <property type="entry name" value="SAM_MT_C5"/>
    <property type="match status" value="1"/>
</dbReference>
<protein>
    <recommendedName>
        <fullName>tRNA (cytosine(38)-C(5))-methyltransferase</fullName>
        <ecNumber>2.1.1.204</ecNumber>
    </recommendedName>
    <alternativeName>
        <fullName>DNA (cytosine-5)-methyltransferase-like protein 2</fullName>
        <shortName>Dnmt2</shortName>
    </alternativeName>
    <alternativeName>
        <fullName>M.SpomI</fullName>
    </alternativeName>
    <alternativeName>
        <fullName>SpIM.SpoI</fullName>
    </alternativeName>
</protein>
<accession>P40999</accession>
<comment type="function">
    <text evidence="3">Specifically methylates cytosine 38 in the anticodon loop of tRNA(Asp). Can also methylate cytosine 38 in tRNA(Glu), albeit to a lower level, but not tRNA(Lys). Pmt1-dependent tRNA methylation is induced by nitrogen limitation and depends on the nutrient-sensing protein kinase sck2. Does not have DNA-methylation activity.</text>
</comment>
<comment type="catalytic activity">
    <reaction>
        <text>cytidine(38) in tRNA + S-adenosyl-L-methionine = 5-methylcytidine(38) in tRNA + S-adenosyl-L-homocysteine + H(+)</text>
        <dbReference type="Rhea" id="RHEA:42956"/>
        <dbReference type="Rhea" id="RHEA-COMP:10299"/>
        <dbReference type="Rhea" id="RHEA-COMP:10300"/>
        <dbReference type="ChEBI" id="CHEBI:15378"/>
        <dbReference type="ChEBI" id="CHEBI:57856"/>
        <dbReference type="ChEBI" id="CHEBI:59789"/>
        <dbReference type="ChEBI" id="CHEBI:74483"/>
        <dbReference type="ChEBI" id="CHEBI:82748"/>
        <dbReference type="EC" id="2.1.1.204"/>
    </reaction>
</comment>
<comment type="subcellular location">
    <subcellularLocation>
        <location evidence="2">Cytoplasm</location>
    </subcellularLocation>
    <subcellularLocation>
        <location evidence="2">Nucleus</location>
    </subcellularLocation>
</comment>
<comment type="induction">
    <text evidence="3">Constitutively expressed at protein and RNA levels.</text>
</comment>
<comment type="similarity">
    <text evidence="1">Belongs to the class I-like SAM-binding methyltransferase superfamily. C5-methyltransferase family.</text>
</comment>
<comment type="caution">
    <text evidence="4 5">Was originally thought not to have cytosine-5 methyltransferase activity, and this was attributed to the insertion of a Ser residue between the Pro-Cys motif found at the active site of C5 MTases (PubMed:8636983). When this serine is deleted it becomes catalytically active and recognizes and methylates the sequence CC[AT]GG. This was in agreement with S.pombe lacking m5C DNA-methylation. However, it has later been shown that it has tRNA-methyltransferase activity despite this sequence variation (PubMed:23074192).</text>
</comment>
<name>PMT1M_SCHPO</name>